<name>PANB_ENTFA</name>
<feature type="chain" id="PRO_0000184844" description="3-methyl-2-oxobutanoate hydroxymethyltransferase">
    <location>
        <begin position="1"/>
        <end position="275"/>
    </location>
</feature>
<feature type="active site" description="Proton acceptor" evidence="1">
    <location>
        <position position="182"/>
    </location>
</feature>
<feature type="binding site" evidence="1">
    <location>
        <begin position="44"/>
        <end position="45"/>
    </location>
    <ligand>
        <name>3-methyl-2-oxobutanoate</name>
        <dbReference type="ChEBI" id="CHEBI:11851"/>
    </ligand>
</feature>
<feature type="binding site" evidence="1">
    <location>
        <position position="44"/>
    </location>
    <ligand>
        <name>Mg(2+)</name>
        <dbReference type="ChEBI" id="CHEBI:18420"/>
    </ligand>
</feature>
<feature type="binding site" evidence="1">
    <location>
        <position position="83"/>
    </location>
    <ligand>
        <name>3-methyl-2-oxobutanoate</name>
        <dbReference type="ChEBI" id="CHEBI:11851"/>
    </ligand>
</feature>
<feature type="binding site" evidence="1">
    <location>
        <position position="83"/>
    </location>
    <ligand>
        <name>Mg(2+)</name>
        <dbReference type="ChEBI" id="CHEBI:18420"/>
    </ligand>
</feature>
<feature type="binding site" evidence="1">
    <location>
        <position position="113"/>
    </location>
    <ligand>
        <name>3-methyl-2-oxobutanoate</name>
        <dbReference type="ChEBI" id="CHEBI:11851"/>
    </ligand>
</feature>
<feature type="binding site" evidence="1">
    <location>
        <position position="115"/>
    </location>
    <ligand>
        <name>Mg(2+)</name>
        <dbReference type="ChEBI" id="CHEBI:18420"/>
    </ligand>
</feature>
<sequence>MKNTAVTFKESKLRNEKLTMLTAYDYSTAKIIDEAGINGILVGDSLGMVCLGHEDTLSVTMEDMIHHTRAVTRGAKNTLVVADMPFMSYQTSVYDSVVNAGRLIKEGRAQVVKLEGGIEVCDKIEAIVKASIPVMAHIGLTPQSVNAFGGFKVQGKDKEAAKELIRAAKAVEKAGAFAVVLECVPTKLAELISKEISIPTIGIGAGAGCDGQILVYQDMLGMYSDFTPKFVKKYANLSEEMNKAFTKYIEEVKDGVFPGPEHGFKISDDVLEKLY</sequence>
<organism>
    <name type="scientific">Enterococcus faecalis (strain ATCC 700802 / V583)</name>
    <dbReference type="NCBI Taxonomy" id="226185"/>
    <lineage>
        <taxon>Bacteria</taxon>
        <taxon>Bacillati</taxon>
        <taxon>Bacillota</taxon>
        <taxon>Bacilli</taxon>
        <taxon>Lactobacillales</taxon>
        <taxon>Enterococcaceae</taxon>
        <taxon>Enterococcus</taxon>
    </lineage>
</organism>
<reference key="1">
    <citation type="journal article" date="2003" name="Science">
        <title>Role of mobile DNA in the evolution of vancomycin-resistant Enterococcus faecalis.</title>
        <authorList>
            <person name="Paulsen I.T."/>
            <person name="Banerjei L."/>
            <person name="Myers G.S.A."/>
            <person name="Nelson K.E."/>
            <person name="Seshadri R."/>
            <person name="Read T.D."/>
            <person name="Fouts D.E."/>
            <person name="Eisen J.A."/>
            <person name="Gill S.R."/>
            <person name="Heidelberg J.F."/>
            <person name="Tettelin H."/>
            <person name="Dodson R.J."/>
            <person name="Umayam L.A."/>
            <person name="Brinkac L.M."/>
            <person name="Beanan M.J."/>
            <person name="Daugherty S.C."/>
            <person name="DeBoy R.T."/>
            <person name="Durkin S.A."/>
            <person name="Kolonay J.F."/>
            <person name="Madupu R."/>
            <person name="Nelson W.C."/>
            <person name="Vamathevan J.J."/>
            <person name="Tran B."/>
            <person name="Upton J."/>
            <person name="Hansen T."/>
            <person name="Shetty J."/>
            <person name="Khouri H.M."/>
            <person name="Utterback T.R."/>
            <person name="Radune D."/>
            <person name="Ketchum K.A."/>
            <person name="Dougherty B.A."/>
            <person name="Fraser C.M."/>
        </authorList>
    </citation>
    <scope>NUCLEOTIDE SEQUENCE [LARGE SCALE GENOMIC DNA]</scope>
    <source>
        <strain>ATCC 700802 / V583</strain>
    </source>
</reference>
<comment type="function">
    <text evidence="1">Catalyzes the reversible reaction in which hydroxymethyl group from 5,10-methylenetetrahydrofolate is transferred onto alpha-ketoisovalerate to form ketopantoate.</text>
</comment>
<comment type="catalytic activity">
    <reaction evidence="1">
        <text>3-methyl-2-oxobutanoate + (6R)-5,10-methylene-5,6,7,8-tetrahydrofolate + H2O = 2-dehydropantoate + (6S)-5,6,7,8-tetrahydrofolate</text>
        <dbReference type="Rhea" id="RHEA:11824"/>
        <dbReference type="ChEBI" id="CHEBI:11561"/>
        <dbReference type="ChEBI" id="CHEBI:11851"/>
        <dbReference type="ChEBI" id="CHEBI:15377"/>
        <dbReference type="ChEBI" id="CHEBI:15636"/>
        <dbReference type="ChEBI" id="CHEBI:57453"/>
        <dbReference type="EC" id="2.1.2.11"/>
    </reaction>
</comment>
<comment type="cofactor">
    <cofactor evidence="1">
        <name>Mg(2+)</name>
        <dbReference type="ChEBI" id="CHEBI:18420"/>
    </cofactor>
    <text evidence="1">Binds 1 Mg(2+) ion per subunit.</text>
</comment>
<comment type="pathway">
    <text evidence="1">Cofactor biosynthesis; (R)-pantothenate biosynthesis; (R)-pantoate from 3-methyl-2-oxobutanoate: step 1/2.</text>
</comment>
<comment type="subunit">
    <text evidence="1">Homodecamer; pentamer of dimers.</text>
</comment>
<comment type="subcellular location">
    <subcellularLocation>
        <location evidence="1">Cytoplasm</location>
    </subcellularLocation>
</comment>
<comment type="similarity">
    <text evidence="1">Belongs to the PanB family.</text>
</comment>
<protein>
    <recommendedName>
        <fullName evidence="1">3-methyl-2-oxobutanoate hydroxymethyltransferase</fullName>
        <ecNumber evidence="1">2.1.2.11</ecNumber>
    </recommendedName>
    <alternativeName>
        <fullName evidence="1">Ketopantoate hydroxymethyltransferase</fullName>
        <shortName evidence="1">KPHMT</shortName>
    </alternativeName>
</protein>
<gene>
    <name evidence="1" type="primary">panB</name>
    <name type="ordered locus">EF_1860</name>
</gene>
<accession>Q833S5</accession>
<dbReference type="EC" id="2.1.2.11" evidence="1"/>
<dbReference type="EMBL" id="AE016830">
    <property type="protein sequence ID" value="AAO81618.1"/>
    <property type="molecule type" value="Genomic_DNA"/>
</dbReference>
<dbReference type="RefSeq" id="NP_815548.1">
    <property type="nucleotide sequence ID" value="NC_004668.1"/>
</dbReference>
<dbReference type="RefSeq" id="WP_002287874.1">
    <property type="nucleotide sequence ID" value="NZ_KE136528.1"/>
</dbReference>
<dbReference type="SMR" id="Q833S5"/>
<dbReference type="STRING" id="226185.EF_1860"/>
<dbReference type="EnsemblBacteria" id="AAO81618">
    <property type="protein sequence ID" value="AAO81618"/>
    <property type="gene ID" value="EF_1860"/>
</dbReference>
<dbReference type="GeneID" id="69567651"/>
<dbReference type="KEGG" id="efa:EF1860"/>
<dbReference type="PATRIC" id="fig|226185.45.peg.1658"/>
<dbReference type="eggNOG" id="COG0413">
    <property type="taxonomic scope" value="Bacteria"/>
</dbReference>
<dbReference type="HOGENOM" id="CLU_036645_1_0_9"/>
<dbReference type="UniPathway" id="UPA00028">
    <property type="reaction ID" value="UER00003"/>
</dbReference>
<dbReference type="Proteomes" id="UP000001415">
    <property type="component" value="Chromosome"/>
</dbReference>
<dbReference type="GO" id="GO:0005737">
    <property type="term" value="C:cytoplasm"/>
    <property type="evidence" value="ECO:0007669"/>
    <property type="project" value="UniProtKB-SubCell"/>
</dbReference>
<dbReference type="GO" id="GO:0003864">
    <property type="term" value="F:3-methyl-2-oxobutanoate hydroxymethyltransferase activity"/>
    <property type="evidence" value="ECO:0007669"/>
    <property type="project" value="UniProtKB-UniRule"/>
</dbReference>
<dbReference type="GO" id="GO:0000287">
    <property type="term" value="F:magnesium ion binding"/>
    <property type="evidence" value="ECO:0007669"/>
    <property type="project" value="TreeGrafter"/>
</dbReference>
<dbReference type="GO" id="GO:0015940">
    <property type="term" value="P:pantothenate biosynthetic process"/>
    <property type="evidence" value="ECO:0007669"/>
    <property type="project" value="UniProtKB-UniRule"/>
</dbReference>
<dbReference type="CDD" id="cd06557">
    <property type="entry name" value="KPHMT-like"/>
    <property type="match status" value="1"/>
</dbReference>
<dbReference type="FunFam" id="3.20.20.60:FF:000003">
    <property type="entry name" value="3-methyl-2-oxobutanoate hydroxymethyltransferase"/>
    <property type="match status" value="1"/>
</dbReference>
<dbReference type="Gene3D" id="3.20.20.60">
    <property type="entry name" value="Phosphoenolpyruvate-binding domains"/>
    <property type="match status" value="1"/>
</dbReference>
<dbReference type="HAMAP" id="MF_00156">
    <property type="entry name" value="PanB"/>
    <property type="match status" value="1"/>
</dbReference>
<dbReference type="InterPro" id="IPR003700">
    <property type="entry name" value="Pantoate_hydroxy_MeTrfase"/>
</dbReference>
<dbReference type="InterPro" id="IPR015813">
    <property type="entry name" value="Pyrv/PenolPyrv_kinase-like_dom"/>
</dbReference>
<dbReference type="InterPro" id="IPR040442">
    <property type="entry name" value="Pyrv_kinase-like_dom_sf"/>
</dbReference>
<dbReference type="NCBIfam" id="TIGR00222">
    <property type="entry name" value="panB"/>
    <property type="match status" value="1"/>
</dbReference>
<dbReference type="NCBIfam" id="NF001452">
    <property type="entry name" value="PRK00311.1"/>
    <property type="match status" value="1"/>
</dbReference>
<dbReference type="PANTHER" id="PTHR20881">
    <property type="entry name" value="3-METHYL-2-OXOBUTANOATE HYDROXYMETHYLTRANSFERASE"/>
    <property type="match status" value="1"/>
</dbReference>
<dbReference type="PANTHER" id="PTHR20881:SF0">
    <property type="entry name" value="3-METHYL-2-OXOBUTANOATE HYDROXYMETHYLTRANSFERASE"/>
    <property type="match status" value="1"/>
</dbReference>
<dbReference type="Pfam" id="PF02548">
    <property type="entry name" value="Pantoate_transf"/>
    <property type="match status" value="1"/>
</dbReference>
<dbReference type="PIRSF" id="PIRSF000388">
    <property type="entry name" value="Pantoate_hydroxy_MeTrfase"/>
    <property type="match status" value="1"/>
</dbReference>
<dbReference type="SUPFAM" id="SSF51621">
    <property type="entry name" value="Phosphoenolpyruvate/pyruvate domain"/>
    <property type="match status" value="1"/>
</dbReference>
<proteinExistence type="inferred from homology"/>
<keyword id="KW-0963">Cytoplasm</keyword>
<keyword id="KW-0460">Magnesium</keyword>
<keyword id="KW-0479">Metal-binding</keyword>
<keyword id="KW-0566">Pantothenate biosynthesis</keyword>
<keyword id="KW-1185">Reference proteome</keyword>
<keyword id="KW-0808">Transferase</keyword>
<evidence type="ECO:0000255" key="1">
    <source>
        <dbReference type="HAMAP-Rule" id="MF_00156"/>
    </source>
</evidence>